<dbReference type="EC" id="6.3.2.8" evidence="1"/>
<dbReference type="EMBL" id="CP000016">
    <property type="protein sequence ID" value="AAZ40787.1"/>
    <property type="molecule type" value="Genomic_DNA"/>
</dbReference>
<dbReference type="RefSeq" id="WP_011282694.1">
    <property type="nucleotide sequence ID" value="NC_007292.1"/>
</dbReference>
<dbReference type="SMR" id="Q493Q0"/>
<dbReference type="STRING" id="291272.BPEN_147"/>
<dbReference type="KEGG" id="bpn:BPEN_147"/>
<dbReference type="eggNOG" id="COG0773">
    <property type="taxonomic scope" value="Bacteria"/>
</dbReference>
<dbReference type="HOGENOM" id="CLU_028104_2_2_6"/>
<dbReference type="OrthoDB" id="9804126at2"/>
<dbReference type="UniPathway" id="UPA00219"/>
<dbReference type="Proteomes" id="UP000007794">
    <property type="component" value="Chromosome"/>
</dbReference>
<dbReference type="GO" id="GO:0005737">
    <property type="term" value="C:cytoplasm"/>
    <property type="evidence" value="ECO:0007669"/>
    <property type="project" value="UniProtKB-SubCell"/>
</dbReference>
<dbReference type="GO" id="GO:0005524">
    <property type="term" value="F:ATP binding"/>
    <property type="evidence" value="ECO:0007669"/>
    <property type="project" value="UniProtKB-UniRule"/>
</dbReference>
<dbReference type="GO" id="GO:0008763">
    <property type="term" value="F:UDP-N-acetylmuramate-L-alanine ligase activity"/>
    <property type="evidence" value="ECO:0007669"/>
    <property type="project" value="UniProtKB-UniRule"/>
</dbReference>
<dbReference type="GO" id="GO:0051301">
    <property type="term" value="P:cell division"/>
    <property type="evidence" value="ECO:0007669"/>
    <property type="project" value="UniProtKB-KW"/>
</dbReference>
<dbReference type="GO" id="GO:0071555">
    <property type="term" value="P:cell wall organization"/>
    <property type="evidence" value="ECO:0007669"/>
    <property type="project" value="UniProtKB-KW"/>
</dbReference>
<dbReference type="GO" id="GO:0009252">
    <property type="term" value="P:peptidoglycan biosynthetic process"/>
    <property type="evidence" value="ECO:0007669"/>
    <property type="project" value="UniProtKB-UniRule"/>
</dbReference>
<dbReference type="GO" id="GO:0008360">
    <property type="term" value="P:regulation of cell shape"/>
    <property type="evidence" value="ECO:0007669"/>
    <property type="project" value="UniProtKB-KW"/>
</dbReference>
<dbReference type="FunFam" id="3.40.1190.10:FF:000001">
    <property type="entry name" value="UDP-N-acetylmuramate--L-alanine ligase"/>
    <property type="match status" value="1"/>
</dbReference>
<dbReference type="Gene3D" id="3.90.190.20">
    <property type="entry name" value="Mur ligase, C-terminal domain"/>
    <property type="match status" value="1"/>
</dbReference>
<dbReference type="Gene3D" id="3.40.1190.10">
    <property type="entry name" value="Mur-like, catalytic domain"/>
    <property type="match status" value="1"/>
</dbReference>
<dbReference type="Gene3D" id="3.40.50.720">
    <property type="entry name" value="NAD(P)-binding Rossmann-like Domain"/>
    <property type="match status" value="1"/>
</dbReference>
<dbReference type="HAMAP" id="MF_00046">
    <property type="entry name" value="MurC"/>
    <property type="match status" value="1"/>
</dbReference>
<dbReference type="InterPro" id="IPR036565">
    <property type="entry name" value="Mur-like_cat_sf"/>
</dbReference>
<dbReference type="InterPro" id="IPR004101">
    <property type="entry name" value="Mur_ligase_C"/>
</dbReference>
<dbReference type="InterPro" id="IPR036615">
    <property type="entry name" value="Mur_ligase_C_dom_sf"/>
</dbReference>
<dbReference type="InterPro" id="IPR013221">
    <property type="entry name" value="Mur_ligase_cen"/>
</dbReference>
<dbReference type="InterPro" id="IPR000713">
    <property type="entry name" value="Mur_ligase_N"/>
</dbReference>
<dbReference type="InterPro" id="IPR050061">
    <property type="entry name" value="MurCDEF_pg_biosynth"/>
</dbReference>
<dbReference type="InterPro" id="IPR005758">
    <property type="entry name" value="UDP-N-AcMur_Ala_ligase_MurC"/>
</dbReference>
<dbReference type="NCBIfam" id="TIGR01082">
    <property type="entry name" value="murC"/>
    <property type="match status" value="1"/>
</dbReference>
<dbReference type="PANTHER" id="PTHR43445:SF3">
    <property type="entry name" value="UDP-N-ACETYLMURAMATE--L-ALANINE LIGASE"/>
    <property type="match status" value="1"/>
</dbReference>
<dbReference type="PANTHER" id="PTHR43445">
    <property type="entry name" value="UDP-N-ACETYLMURAMATE--L-ALANINE LIGASE-RELATED"/>
    <property type="match status" value="1"/>
</dbReference>
<dbReference type="Pfam" id="PF01225">
    <property type="entry name" value="Mur_ligase"/>
    <property type="match status" value="1"/>
</dbReference>
<dbReference type="Pfam" id="PF02875">
    <property type="entry name" value="Mur_ligase_C"/>
    <property type="match status" value="1"/>
</dbReference>
<dbReference type="Pfam" id="PF08245">
    <property type="entry name" value="Mur_ligase_M"/>
    <property type="match status" value="1"/>
</dbReference>
<dbReference type="SUPFAM" id="SSF51984">
    <property type="entry name" value="MurCD N-terminal domain"/>
    <property type="match status" value="1"/>
</dbReference>
<dbReference type="SUPFAM" id="SSF53623">
    <property type="entry name" value="MurD-like peptide ligases, catalytic domain"/>
    <property type="match status" value="1"/>
</dbReference>
<dbReference type="SUPFAM" id="SSF53244">
    <property type="entry name" value="MurD-like peptide ligases, peptide-binding domain"/>
    <property type="match status" value="1"/>
</dbReference>
<evidence type="ECO:0000255" key="1">
    <source>
        <dbReference type="HAMAP-Rule" id="MF_00046"/>
    </source>
</evidence>
<feature type="chain" id="PRO_0000242543" description="UDP-N-acetylmuramate--L-alanine ligase">
    <location>
        <begin position="1"/>
        <end position="480"/>
    </location>
</feature>
<feature type="binding site" evidence="1">
    <location>
        <begin position="126"/>
        <end position="132"/>
    </location>
    <ligand>
        <name>ATP</name>
        <dbReference type="ChEBI" id="CHEBI:30616"/>
    </ligand>
</feature>
<gene>
    <name evidence="1" type="primary">murC</name>
    <name type="ordered locus">BPEN_147</name>
</gene>
<keyword id="KW-0067">ATP-binding</keyword>
<keyword id="KW-0131">Cell cycle</keyword>
<keyword id="KW-0132">Cell division</keyword>
<keyword id="KW-0133">Cell shape</keyword>
<keyword id="KW-0961">Cell wall biogenesis/degradation</keyword>
<keyword id="KW-0963">Cytoplasm</keyword>
<keyword id="KW-0436">Ligase</keyword>
<keyword id="KW-0547">Nucleotide-binding</keyword>
<keyword id="KW-0573">Peptidoglycan synthesis</keyword>
<keyword id="KW-1185">Reference proteome</keyword>
<sequence>MSGILLSNPVNAIPLMNRIRKIHFVGIGGTGMCGIAEILAHEGYCITGSDIVYSSTTRHLFELGVKIFIGHKYSNINNANVIVVSSAIHPNNPEILAAKQARIPVIKRAEMLSELMRFRHGIAISGTHGKTTTTTMIVNIYTAAGLDPTFINGGIVKSEGVHARLGYSRYLIVEADESDNSFLHLHPMVEVITNIDTDHIHEYQGNFEYLKKAFIDFLHNLPFYGYAIVCIDDPVICEILPKIKRKIITYGFNKNANLHIFNYRQHIEKSSFTVSRFNQTKLQVTLNAPGCHNALNATAAIAVATEEGISDKIILKTMLDFQGTHRRFENLGYYSLNKINDQTGEILLIDDYGHHPAELHATIVAIRTGWPDRRLVMVFQPHRYTRIKELYYDFIDVLSNVDILLILHVYSAGEPPILGADSQSLCHAIREFGKINPTFISNTKMLSGALFRLLRNNDLLLIQGAGTIGEVVRRLIVKND</sequence>
<name>MURC_BLOPB</name>
<organism>
    <name type="scientific">Blochmanniella pennsylvanica (strain BPEN)</name>
    <dbReference type="NCBI Taxonomy" id="291272"/>
    <lineage>
        <taxon>Bacteria</taxon>
        <taxon>Pseudomonadati</taxon>
        <taxon>Pseudomonadota</taxon>
        <taxon>Gammaproteobacteria</taxon>
        <taxon>Enterobacterales</taxon>
        <taxon>Enterobacteriaceae</taxon>
        <taxon>ant endosymbionts</taxon>
        <taxon>Candidatus Blochmanniella</taxon>
    </lineage>
</organism>
<comment type="function">
    <text evidence="1">Cell wall formation.</text>
</comment>
<comment type="catalytic activity">
    <reaction evidence="1">
        <text>UDP-N-acetyl-alpha-D-muramate + L-alanine + ATP = UDP-N-acetyl-alpha-D-muramoyl-L-alanine + ADP + phosphate + H(+)</text>
        <dbReference type="Rhea" id="RHEA:23372"/>
        <dbReference type="ChEBI" id="CHEBI:15378"/>
        <dbReference type="ChEBI" id="CHEBI:30616"/>
        <dbReference type="ChEBI" id="CHEBI:43474"/>
        <dbReference type="ChEBI" id="CHEBI:57972"/>
        <dbReference type="ChEBI" id="CHEBI:70757"/>
        <dbReference type="ChEBI" id="CHEBI:83898"/>
        <dbReference type="ChEBI" id="CHEBI:456216"/>
        <dbReference type="EC" id="6.3.2.8"/>
    </reaction>
</comment>
<comment type="pathway">
    <text evidence="1">Cell wall biogenesis; peptidoglycan biosynthesis.</text>
</comment>
<comment type="subcellular location">
    <subcellularLocation>
        <location evidence="1">Cytoplasm</location>
    </subcellularLocation>
</comment>
<comment type="similarity">
    <text evidence="1">Belongs to the MurCDEF family.</text>
</comment>
<reference key="1">
    <citation type="journal article" date="2005" name="Genome Res.">
        <title>Genome sequence of Blochmannia pennsylvanicus indicates parallel evolutionary trends among bacterial mutualists of insects.</title>
        <authorList>
            <person name="Degnan P.H."/>
            <person name="Lazarus A.B."/>
            <person name="Wernegreen J.J."/>
        </authorList>
    </citation>
    <scope>NUCLEOTIDE SEQUENCE [LARGE SCALE GENOMIC DNA]</scope>
    <source>
        <strain>BPEN</strain>
    </source>
</reference>
<protein>
    <recommendedName>
        <fullName evidence="1">UDP-N-acetylmuramate--L-alanine ligase</fullName>
        <ecNumber evidence="1">6.3.2.8</ecNumber>
    </recommendedName>
    <alternativeName>
        <fullName evidence="1">UDP-N-acetylmuramoyl-L-alanine synthetase</fullName>
    </alternativeName>
</protein>
<proteinExistence type="inferred from homology"/>
<accession>Q493Q0</accession>